<proteinExistence type="inferred from homology"/>
<dbReference type="EMBL" id="NINY01000000">
    <property type="status" value="NOT_ANNOTATED_CDS"/>
    <property type="molecule type" value="Genomic_DNA"/>
</dbReference>
<dbReference type="RefSeq" id="XP_021537001.1">
    <property type="nucleotide sequence ID" value="XM_021681326.2"/>
</dbReference>
<dbReference type="RefSeq" id="XP_044778079.1">
    <property type="nucleotide sequence ID" value="XM_044922144.1"/>
</dbReference>
<dbReference type="SMR" id="P0DPH2"/>
<dbReference type="GeneID" id="110572907"/>
<dbReference type="InParanoid" id="P0DPH2"/>
<dbReference type="Proteomes" id="UP000248481">
    <property type="component" value="Chromosome 16"/>
</dbReference>
<dbReference type="GO" id="GO:0034364">
    <property type="term" value="C:high-density lipoprotein particle"/>
    <property type="evidence" value="ECO:0007669"/>
    <property type="project" value="TreeGrafter"/>
</dbReference>
<dbReference type="GO" id="GO:0034361">
    <property type="term" value="C:very-low-density lipoprotein particle"/>
    <property type="evidence" value="ECO:0007669"/>
    <property type="project" value="UniProtKB-KW"/>
</dbReference>
<dbReference type="GO" id="GO:0005504">
    <property type="term" value="F:fatty acid binding"/>
    <property type="evidence" value="ECO:0007669"/>
    <property type="project" value="TreeGrafter"/>
</dbReference>
<dbReference type="GO" id="GO:0004859">
    <property type="term" value="F:phospholipase inhibitor activity"/>
    <property type="evidence" value="ECO:0007669"/>
    <property type="project" value="TreeGrafter"/>
</dbReference>
<dbReference type="GO" id="GO:0006869">
    <property type="term" value="P:lipid transport"/>
    <property type="evidence" value="ECO:0007669"/>
    <property type="project" value="UniProtKB-KW"/>
</dbReference>
<dbReference type="GO" id="GO:0042157">
    <property type="term" value="P:lipoprotein metabolic process"/>
    <property type="evidence" value="ECO:0007669"/>
    <property type="project" value="InterPro"/>
</dbReference>
<dbReference type="GO" id="GO:0032375">
    <property type="term" value="P:negative regulation of cholesterol transport"/>
    <property type="evidence" value="ECO:0007669"/>
    <property type="project" value="TreeGrafter"/>
</dbReference>
<dbReference type="GO" id="GO:0050995">
    <property type="term" value="P:negative regulation of lipid catabolic process"/>
    <property type="evidence" value="ECO:0007669"/>
    <property type="project" value="TreeGrafter"/>
</dbReference>
<dbReference type="GO" id="GO:0010916">
    <property type="term" value="P:negative regulation of very-low-density lipoprotein particle clearance"/>
    <property type="evidence" value="ECO:0007669"/>
    <property type="project" value="TreeGrafter"/>
</dbReference>
<dbReference type="GO" id="GO:0006641">
    <property type="term" value="P:triglyceride metabolic process"/>
    <property type="evidence" value="ECO:0007669"/>
    <property type="project" value="TreeGrafter"/>
</dbReference>
<dbReference type="GO" id="GO:0034447">
    <property type="term" value="P:very-low-density lipoprotein particle clearance"/>
    <property type="evidence" value="ECO:0007669"/>
    <property type="project" value="TreeGrafter"/>
</dbReference>
<dbReference type="Gene3D" id="4.10.260.30">
    <property type="entry name" value="Apolipoprotein C-I"/>
    <property type="match status" value="1"/>
</dbReference>
<dbReference type="InterPro" id="IPR043081">
    <property type="entry name" value="ApoC-1_sf"/>
</dbReference>
<dbReference type="InterPro" id="IPR006781">
    <property type="entry name" value="ApoC-I"/>
</dbReference>
<dbReference type="PANTHER" id="PTHR16565">
    <property type="entry name" value="APOLIPOPROTEIN C-I"/>
    <property type="match status" value="1"/>
</dbReference>
<dbReference type="PANTHER" id="PTHR16565:SF2">
    <property type="entry name" value="APOLIPOPROTEIN C-I"/>
    <property type="match status" value="1"/>
</dbReference>
<dbReference type="Pfam" id="PF04691">
    <property type="entry name" value="ApoC-I"/>
    <property type="match status" value="1"/>
</dbReference>
<organism>
    <name type="scientific">Neomonachus schauinslandi</name>
    <name type="common">Hawaiian monk seal</name>
    <name type="synonym">Monachus schauinslandi</name>
    <dbReference type="NCBI Taxonomy" id="29088"/>
    <lineage>
        <taxon>Eukaryota</taxon>
        <taxon>Metazoa</taxon>
        <taxon>Chordata</taxon>
        <taxon>Craniata</taxon>
        <taxon>Vertebrata</taxon>
        <taxon>Euteleostomi</taxon>
        <taxon>Mammalia</taxon>
        <taxon>Eutheria</taxon>
        <taxon>Laurasiatheria</taxon>
        <taxon>Carnivora</taxon>
        <taxon>Caniformia</taxon>
        <taxon>Pinnipedia</taxon>
        <taxon>Phocidae</taxon>
        <taxon>Monachinae</taxon>
        <taxon>Monachini</taxon>
        <taxon>Neomonachus</taxon>
    </lineage>
</organism>
<comment type="function">
    <text evidence="1 2">Inhibitor of lipoprotein binding to the low density lipoprotein (LDL) receptor, LDL receptor-related protein, and very low density lipoprotein (VLDL) receptor. Associates with high density lipoproteins (HDL) and the triacylglycerol-rich lipoproteins in the plasma and makes up about 10% of the protein of the VLDL and 2% of that of HDL. Appears to interfere directly with fatty acid uptake and is also the major plasma inhibitor of cholesteryl ester transfer protein (CETP). Binds free fatty acids and reduces their intracellular esterification. Modulates the interaction of APOE with beta-migrating VLDL and inhibits binding of beta-VLDL to the LDL receptor-related protein.</text>
</comment>
<comment type="subcellular location">
    <subcellularLocation>
        <location evidence="1">Secreted</location>
    </subcellularLocation>
</comment>
<comment type="similarity">
    <text evidence="5">Belongs to the apolipoprotein C1 family.</text>
</comment>
<evidence type="ECO:0000250" key="1">
    <source>
        <dbReference type="UniProtKB" id="P02654"/>
    </source>
</evidence>
<evidence type="ECO:0000250" key="2">
    <source>
        <dbReference type="UniProtKB" id="P33047"/>
    </source>
</evidence>
<evidence type="ECO:0000250" key="3">
    <source>
        <dbReference type="UniProtKB" id="P86336"/>
    </source>
</evidence>
<evidence type="ECO:0000255" key="4"/>
<evidence type="ECO:0000305" key="5"/>
<accession>P0DPH2</accession>
<keyword id="KW-0445">Lipid transport</keyword>
<keyword id="KW-1185">Reference proteome</keyword>
<keyword id="KW-0964">Secreted</keyword>
<keyword id="KW-0732">Signal</keyword>
<keyword id="KW-0813">Transport</keyword>
<keyword id="KW-0850">VLDL</keyword>
<sequence length="88" mass="9789">MRLFLSLPVLVVVLAMVWEGPAPTQAAPEISSTLGRIPDKLKEFGNTLEDKARAAIDSIKQSDIPAKTRNWFSETFNKVKEQLKTAFS</sequence>
<name>APOC1_NEOSC</name>
<reference key="1">
    <citation type="submission" date="2017-05" db="EMBL/GenBank/DDBJ databases">
        <title>Improved de novo genome assembly: linked-read sequencing combined with optical mapping produce a high quality mammalian genome at relatively low cost.</title>
        <authorList>
            <person name="Mohr D.W."/>
            <person name="Scott A.F."/>
        </authorList>
    </citation>
    <scope>NUCLEOTIDE SEQUENCE [LARGE SCALE GENOMIC DNA]</scope>
</reference>
<reference key="2">
    <citation type="unpublished observations" date="2018-05">
        <authorList>
            <person name="Puppione D.L."/>
        </authorList>
    </citation>
    <scope>IDENTIFICATION</scope>
</reference>
<protein>
    <recommendedName>
        <fullName>Apolipoprotein C-I</fullName>
        <shortName>Apo-CI</shortName>
        <shortName>ApoC-I</shortName>
    </recommendedName>
    <alternativeName>
        <fullName>Apolipoprotein C1</fullName>
    </alternativeName>
    <component>
        <recommendedName>
            <fullName>Truncated apolipoprotein C-I</fullName>
        </recommendedName>
    </component>
</protein>
<gene>
    <name type="primary">APOC1</name>
</gene>
<feature type="signal peptide" evidence="4">
    <location>
        <begin position="1"/>
        <end position="26"/>
    </location>
</feature>
<feature type="chain" id="PRO_0000444588" description="Apolipoprotein C-I">
    <location>
        <begin position="27"/>
        <end position="88"/>
    </location>
</feature>
<feature type="chain" id="PRO_0000444589" description="Truncated apolipoprotein C-I" evidence="3">
    <location>
        <begin position="29"/>
        <end position="88"/>
    </location>
</feature>